<reference key="1">
    <citation type="journal article" date="2011" name="Stand. Genomic Sci.">
        <title>Complete genome sequence of 'Thioalkalivibrio sulfidophilus' HL-EbGr7.</title>
        <authorList>
            <person name="Muyzer G."/>
            <person name="Sorokin D.Y."/>
            <person name="Mavromatis K."/>
            <person name="Lapidus A."/>
            <person name="Clum A."/>
            <person name="Ivanova N."/>
            <person name="Pati A."/>
            <person name="d'Haeseleer P."/>
            <person name="Woyke T."/>
            <person name="Kyrpides N.C."/>
        </authorList>
    </citation>
    <scope>NUCLEOTIDE SEQUENCE [LARGE SCALE GENOMIC DNA]</scope>
    <source>
        <strain>HL-EbGR7</strain>
    </source>
</reference>
<proteinExistence type="inferred from homology"/>
<gene>
    <name evidence="1" type="primary">mdh</name>
    <name type="ordered locus">Tgr7_2971</name>
</gene>
<dbReference type="EC" id="1.1.1.37" evidence="1"/>
<dbReference type="EMBL" id="CP001339">
    <property type="protein sequence ID" value="ACL74043.1"/>
    <property type="molecule type" value="Genomic_DNA"/>
</dbReference>
<dbReference type="RefSeq" id="WP_012639506.1">
    <property type="nucleotide sequence ID" value="NC_011901.1"/>
</dbReference>
<dbReference type="SMR" id="B8GPC3"/>
<dbReference type="STRING" id="396588.Tgr7_2971"/>
<dbReference type="KEGG" id="tgr:Tgr7_2971"/>
<dbReference type="eggNOG" id="COG0039">
    <property type="taxonomic scope" value="Bacteria"/>
</dbReference>
<dbReference type="HOGENOM" id="CLU_045401_2_1_6"/>
<dbReference type="OrthoDB" id="9802969at2"/>
<dbReference type="Proteomes" id="UP000002383">
    <property type="component" value="Chromosome"/>
</dbReference>
<dbReference type="GO" id="GO:0004459">
    <property type="term" value="F:L-lactate dehydrogenase activity"/>
    <property type="evidence" value="ECO:0007669"/>
    <property type="project" value="TreeGrafter"/>
</dbReference>
<dbReference type="GO" id="GO:0030060">
    <property type="term" value="F:L-malate dehydrogenase (NAD+) activity"/>
    <property type="evidence" value="ECO:0007669"/>
    <property type="project" value="UniProtKB-UniRule"/>
</dbReference>
<dbReference type="GO" id="GO:0006089">
    <property type="term" value="P:lactate metabolic process"/>
    <property type="evidence" value="ECO:0007669"/>
    <property type="project" value="TreeGrafter"/>
</dbReference>
<dbReference type="GO" id="GO:0006099">
    <property type="term" value="P:tricarboxylic acid cycle"/>
    <property type="evidence" value="ECO:0007669"/>
    <property type="project" value="UniProtKB-UniRule"/>
</dbReference>
<dbReference type="CDD" id="cd01339">
    <property type="entry name" value="LDH-like_MDH"/>
    <property type="match status" value="1"/>
</dbReference>
<dbReference type="FunFam" id="3.40.50.720:FF:000018">
    <property type="entry name" value="Malate dehydrogenase"/>
    <property type="match status" value="1"/>
</dbReference>
<dbReference type="Gene3D" id="3.90.110.10">
    <property type="entry name" value="Lactate dehydrogenase/glycoside hydrolase, family 4, C-terminal"/>
    <property type="match status" value="1"/>
</dbReference>
<dbReference type="Gene3D" id="3.40.50.720">
    <property type="entry name" value="NAD(P)-binding Rossmann-like Domain"/>
    <property type="match status" value="1"/>
</dbReference>
<dbReference type="HAMAP" id="MF_00487">
    <property type="entry name" value="Malate_dehydrog_3"/>
    <property type="match status" value="1"/>
</dbReference>
<dbReference type="InterPro" id="IPR001557">
    <property type="entry name" value="L-lactate/malate_DH"/>
</dbReference>
<dbReference type="InterPro" id="IPR022383">
    <property type="entry name" value="Lactate/malate_DH_C"/>
</dbReference>
<dbReference type="InterPro" id="IPR001236">
    <property type="entry name" value="Lactate/malate_DH_N"/>
</dbReference>
<dbReference type="InterPro" id="IPR015955">
    <property type="entry name" value="Lactate_DH/Glyco_Ohase_4_C"/>
</dbReference>
<dbReference type="InterPro" id="IPR011275">
    <property type="entry name" value="Malate_DH_type3"/>
</dbReference>
<dbReference type="InterPro" id="IPR036291">
    <property type="entry name" value="NAD(P)-bd_dom_sf"/>
</dbReference>
<dbReference type="NCBIfam" id="TIGR01763">
    <property type="entry name" value="MalateDH_bact"/>
    <property type="match status" value="1"/>
</dbReference>
<dbReference type="NCBIfam" id="NF004863">
    <property type="entry name" value="PRK06223.1"/>
    <property type="match status" value="1"/>
</dbReference>
<dbReference type="PANTHER" id="PTHR43128">
    <property type="entry name" value="L-2-HYDROXYCARBOXYLATE DEHYDROGENASE (NAD(P)(+))"/>
    <property type="match status" value="1"/>
</dbReference>
<dbReference type="PANTHER" id="PTHR43128:SF16">
    <property type="entry name" value="L-LACTATE DEHYDROGENASE"/>
    <property type="match status" value="1"/>
</dbReference>
<dbReference type="Pfam" id="PF02866">
    <property type="entry name" value="Ldh_1_C"/>
    <property type="match status" value="1"/>
</dbReference>
<dbReference type="Pfam" id="PF00056">
    <property type="entry name" value="Ldh_1_N"/>
    <property type="match status" value="1"/>
</dbReference>
<dbReference type="PIRSF" id="PIRSF000102">
    <property type="entry name" value="Lac_mal_DH"/>
    <property type="match status" value="1"/>
</dbReference>
<dbReference type="PRINTS" id="PR00086">
    <property type="entry name" value="LLDHDRGNASE"/>
</dbReference>
<dbReference type="SUPFAM" id="SSF56327">
    <property type="entry name" value="LDH C-terminal domain-like"/>
    <property type="match status" value="1"/>
</dbReference>
<dbReference type="SUPFAM" id="SSF51735">
    <property type="entry name" value="NAD(P)-binding Rossmann-fold domains"/>
    <property type="match status" value="1"/>
</dbReference>
<feature type="chain" id="PRO_1000191659" description="Malate dehydrogenase">
    <location>
        <begin position="1"/>
        <end position="307"/>
    </location>
</feature>
<feature type="active site" description="Proton acceptor" evidence="1">
    <location>
        <position position="175"/>
    </location>
</feature>
<feature type="binding site" evidence="1">
    <location>
        <begin position="8"/>
        <end position="13"/>
    </location>
    <ligand>
        <name>NAD(+)</name>
        <dbReference type="ChEBI" id="CHEBI:57540"/>
    </ligand>
</feature>
<feature type="binding site" evidence="1">
    <location>
        <position position="33"/>
    </location>
    <ligand>
        <name>NAD(+)</name>
        <dbReference type="ChEBI" id="CHEBI:57540"/>
    </ligand>
</feature>
<feature type="binding site" evidence="1">
    <location>
        <position position="82"/>
    </location>
    <ligand>
        <name>substrate</name>
    </ligand>
</feature>
<feature type="binding site" evidence="1">
    <location>
        <position position="88"/>
    </location>
    <ligand>
        <name>substrate</name>
    </ligand>
</feature>
<feature type="binding site" evidence="1">
    <location>
        <position position="95"/>
    </location>
    <ligand>
        <name>NAD(+)</name>
        <dbReference type="ChEBI" id="CHEBI:57540"/>
    </ligand>
</feature>
<feature type="binding site" evidence="1">
    <location>
        <begin position="118"/>
        <end position="120"/>
    </location>
    <ligand>
        <name>NAD(+)</name>
        <dbReference type="ChEBI" id="CHEBI:57540"/>
    </ligand>
</feature>
<feature type="binding site" evidence="1">
    <location>
        <position position="120"/>
    </location>
    <ligand>
        <name>substrate</name>
    </ligand>
</feature>
<feature type="binding site" evidence="1">
    <location>
        <position position="151"/>
    </location>
    <ligand>
        <name>substrate</name>
    </ligand>
</feature>
<comment type="function">
    <text evidence="1">Catalyzes the reversible oxidation of malate to oxaloacetate.</text>
</comment>
<comment type="catalytic activity">
    <reaction evidence="1">
        <text>(S)-malate + NAD(+) = oxaloacetate + NADH + H(+)</text>
        <dbReference type="Rhea" id="RHEA:21432"/>
        <dbReference type="ChEBI" id="CHEBI:15378"/>
        <dbReference type="ChEBI" id="CHEBI:15589"/>
        <dbReference type="ChEBI" id="CHEBI:16452"/>
        <dbReference type="ChEBI" id="CHEBI:57540"/>
        <dbReference type="ChEBI" id="CHEBI:57945"/>
        <dbReference type="EC" id="1.1.1.37"/>
    </reaction>
</comment>
<comment type="similarity">
    <text evidence="1">Belongs to the LDH/MDH superfamily. MDH type 3 family.</text>
</comment>
<organism>
    <name type="scientific">Thioalkalivibrio sulfidiphilus (strain HL-EbGR7)</name>
    <dbReference type="NCBI Taxonomy" id="396588"/>
    <lineage>
        <taxon>Bacteria</taxon>
        <taxon>Pseudomonadati</taxon>
        <taxon>Pseudomonadota</taxon>
        <taxon>Gammaproteobacteria</taxon>
        <taxon>Chromatiales</taxon>
        <taxon>Ectothiorhodospiraceae</taxon>
        <taxon>Thioalkalivibrio</taxon>
    </lineage>
</organism>
<sequence length="307" mass="32870">MEKIAIIGAGRVGESTAQFLAKNDTCRELVLLDVREGAAEGAALDIQETAPLFGFDTRLKGGTDAAILSGAELVVITAGIPRKPGMSRSDVLDTNVAILDKLVDGIMEHAPDAMLLLVSNPVDVLTYRAWQRTGWPRNRVFGQAGVLDSSRMASFVALETGLSVNDINAMVLGGHGDSMVPMLRYSTINGIPVRHFLSEEAIARIVERTRHGGAEILALKQTSSAYDAPAAAIAAMVDAIALDRKRVLPTVALLEGEYGERDVAMGVPCILGRNGVESVIELPLEPSERKEFDQSLAGVRDDINRLK</sequence>
<keyword id="KW-0520">NAD</keyword>
<keyword id="KW-0560">Oxidoreductase</keyword>
<keyword id="KW-1185">Reference proteome</keyword>
<keyword id="KW-0816">Tricarboxylic acid cycle</keyword>
<protein>
    <recommendedName>
        <fullName evidence="1">Malate dehydrogenase</fullName>
        <ecNumber evidence="1">1.1.1.37</ecNumber>
    </recommendedName>
</protein>
<name>MDH_THISH</name>
<accession>B8GPC3</accession>
<evidence type="ECO:0000255" key="1">
    <source>
        <dbReference type="HAMAP-Rule" id="MF_00487"/>
    </source>
</evidence>